<dbReference type="EMBL" id="CP001185">
    <property type="protein sequence ID" value="ACJ74572.1"/>
    <property type="molecule type" value="Genomic_DNA"/>
</dbReference>
<dbReference type="RefSeq" id="WP_004103399.1">
    <property type="nucleotide sequence ID" value="NC_011653.1"/>
</dbReference>
<dbReference type="SMR" id="B7IEQ8"/>
<dbReference type="STRING" id="484019.THA_64"/>
<dbReference type="KEGG" id="taf:THA_64"/>
<dbReference type="eggNOG" id="COG0228">
    <property type="taxonomic scope" value="Bacteria"/>
</dbReference>
<dbReference type="HOGENOM" id="CLU_100590_5_0_0"/>
<dbReference type="OrthoDB" id="9807878at2"/>
<dbReference type="Proteomes" id="UP000002453">
    <property type="component" value="Chromosome"/>
</dbReference>
<dbReference type="GO" id="GO:0005737">
    <property type="term" value="C:cytoplasm"/>
    <property type="evidence" value="ECO:0007669"/>
    <property type="project" value="UniProtKB-ARBA"/>
</dbReference>
<dbReference type="GO" id="GO:0015935">
    <property type="term" value="C:small ribosomal subunit"/>
    <property type="evidence" value="ECO:0007669"/>
    <property type="project" value="TreeGrafter"/>
</dbReference>
<dbReference type="GO" id="GO:0003735">
    <property type="term" value="F:structural constituent of ribosome"/>
    <property type="evidence" value="ECO:0007669"/>
    <property type="project" value="InterPro"/>
</dbReference>
<dbReference type="GO" id="GO:0006412">
    <property type="term" value="P:translation"/>
    <property type="evidence" value="ECO:0007669"/>
    <property type="project" value="UniProtKB-UniRule"/>
</dbReference>
<dbReference type="FunFam" id="3.30.1320.10:FF:000005">
    <property type="entry name" value="30S ribosomal protein S16"/>
    <property type="match status" value="1"/>
</dbReference>
<dbReference type="Gene3D" id="3.30.1320.10">
    <property type="match status" value="1"/>
</dbReference>
<dbReference type="HAMAP" id="MF_00385">
    <property type="entry name" value="Ribosomal_bS16"/>
    <property type="match status" value="1"/>
</dbReference>
<dbReference type="InterPro" id="IPR000307">
    <property type="entry name" value="Ribosomal_bS16"/>
</dbReference>
<dbReference type="InterPro" id="IPR020592">
    <property type="entry name" value="Ribosomal_bS16_CS"/>
</dbReference>
<dbReference type="InterPro" id="IPR023803">
    <property type="entry name" value="Ribosomal_bS16_dom_sf"/>
</dbReference>
<dbReference type="NCBIfam" id="TIGR00002">
    <property type="entry name" value="S16"/>
    <property type="match status" value="1"/>
</dbReference>
<dbReference type="PANTHER" id="PTHR12919">
    <property type="entry name" value="30S RIBOSOMAL PROTEIN S16"/>
    <property type="match status" value="1"/>
</dbReference>
<dbReference type="PANTHER" id="PTHR12919:SF20">
    <property type="entry name" value="SMALL RIBOSOMAL SUBUNIT PROTEIN BS16M"/>
    <property type="match status" value="1"/>
</dbReference>
<dbReference type="Pfam" id="PF00886">
    <property type="entry name" value="Ribosomal_S16"/>
    <property type="match status" value="1"/>
</dbReference>
<dbReference type="SUPFAM" id="SSF54565">
    <property type="entry name" value="Ribosomal protein S16"/>
    <property type="match status" value="1"/>
</dbReference>
<dbReference type="PROSITE" id="PS00732">
    <property type="entry name" value="RIBOSOMAL_S16"/>
    <property type="match status" value="1"/>
</dbReference>
<gene>
    <name evidence="1" type="primary">rpsP</name>
    <name type="ordered locus">THA_64</name>
</gene>
<accession>B7IEQ8</accession>
<proteinExistence type="inferred from homology"/>
<comment type="similarity">
    <text evidence="1">Belongs to the bacterial ribosomal protein bS16 family.</text>
</comment>
<evidence type="ECO:0000255" key="1">
    <source>
        <dbReference type="HAMAP-Rule" id="MF_00385"/>
    </source>
</evidence>
<evidence type="ECO:0000305" key="2"/>
<protein>
    <recommendedName>
        <fullName evidence="1">Small ribosomal subunit protein bS16</fullName>
    </recommendedName>
    <alternativeName>
        <fullName evidence="2">30S ribosomal protein S16</fullName>
    </alternativeName>
</protein>
<name>RS16_THEAB</name>
<feature type="chain" id="PRO_1000196484" description="Small ribosomal subunit protein bS16">
    <location>
        <begin position="1"/>
        <end position="94"/>
    </location>
</feature>
<organism>
    <name type="scientific">Thermosipho africanus (strain TCF52B)</name>
    <dbReference type="NCBI Taxonomy" id="484019"/>
    <lineage>
        <taxon>Bacteria</taxon>
        <taxon>Thermotogati</taxon>
        <taxon>Thermotogota</taxon>
        <taxon>Thermotogae</taxon>
        <taxon>Thermotogales</taxon>
        <taxon>Fervidobacteriaceae</taxon>
        <taxon>Thermosipho</taxon>
    </lineage>
</organism>
<reference key="1">
    <citation type="journal article" date="2009" name="J. Bacteriol.">
        <title>The genome of Thermosipho africanus TCF52B: lateral genetic connections to the Firmicutes and Archaea.</title>
        <authorList>
            <person name="Nesboe C.L."/>
            <person name="Bapteste E."/>
            <person name="Curtis B."/>
            <person name="Dahle H."/>
            <person name="Lopez P."/>
            <person name="Macleod D."/>
            <person name="Dlutek M."/>
            <person name="Bowman S."/>
            <person name="Zhaxybayeva O."/>
            <person name="Birkeland N.-K."/>
            <person name="Doolittle W.F."/>
        </authorList>
    </citation>
    <scope>NUCLEOTIDE SEQUENCE [LARGE SCALE GENOMIC DNA]</scope>
    <source>
        <strain>TCF52B</strain>
    </source>
</reference>
<sequence length="94" mass="11142">MVRIRLTRMGKKKQPFYRIVVVDQRKRRDGAYIESLGYYDPIKDPYILNVDVDKAVEWIMKGAQPSDTVRNLLRKAGVFKKVDELKRTKKEENK</sequence>
<keyword id="KW-1185">Reference proteome</keyword>
<keyword id="KW-0687">Ribonucleoprotein</keyword>
<keyword id="KW-0689">Ribosomal protein</keyword>